<gene>
    <name type="primary">UBXN8</name>
    <name type="synonym">UBXD6</name>
</gene>
<sequence>MASRGVVGIFLLSALPLLCLELRRGKPDLGIKDLILLCGRIFLLLALLTLIISVTTSWVNSFKPSQVYLKEEEEKNEKRQKLVRKKQQEAQGEKVSRYIENVLKPSQEMKLKKLEERFYQMTGETWKLSNGHKLGGDEDLELDSESQTSFETSNREAAKRRNLPNSVTNISPPAEQPTKKEVLDLPEEPPETAEEVVTVALRCPSGRVLRRRFFKSCSSQVLFDWMMKLGYRTSLYSLSTSFPRRPLEVEAGWSLQDIGITVDTVLNVEEKEQSS</sequence>
<dbReference type="EMBL" id="BC110208">
    <property type="protein sequence ID" value="AAI10209.1"/>
    <property type="molecule type" value="mRNA"/>
</dbReference>
<dbReference type="RefSeq" id="NP_001033761.1">
    <property type="nucleotide sequence ID" value="NM_001038672.2"/>
</dbReference>
<dbReference type="SMR" id="Q2TBH5"/>
<dbReference type="FunCoup" id="Q2TBH5">
    <property type="interactions" value="254"/>
</dbReference>
<dbReference type="STRING" id="9913.ENSBTAP00000067731"/>
<dbReference type="PaxDb" id="9913-ENSBTAP00000005462"/>
<dbReference type="Ensembl" id="ENSBTAT00000005462.5">
    <property type="protein sequence ID" value="ENSBTAP00000005462.3"/>
    <property type="gene ID" value="ENSBTAG00000004173.5"/>
</dbReference>
<dbReference type="GeneID" id="509646"/>
<dbReference type="KEGG" id="bta:509646"/>
<dbReference type="CTD" id="7993"/>
<dbReference type="VEuPathDB" id="HostDB:ENSBTAG00000004173"/>
<dbReference type="VGNC" id="VGNC:36630">
    <property type="gene designation" value="UBXN8"/>
</dbReference>
<dbReference type="eggNOG" id="KOG1363">
    <property type="taxonomic scope" value="Eukaryota"/>
</dbReference>
<dbReference type="GeneTree" id="ENSGT00390000018326"/>
<dbReference type="HOGENOM" id="CLU_077976_0_0_1"/>
<dbReference type="InParanoid" id="Q2TBH5"/>
<dbReference type="OMA" id="MMKTGYH"/>
<dbReference type="OrthoDB" id="1920064at2759"/>
<dbReference type="TreeFam" id="TF337105"/>
<dbReference type="Proteomes" id="UP000009136">
    <property type="component" value="Chromosome 27"/>
</dbReference>
<dbReference type="Bgee" id="ENSBTAG00000004173">
    <property type="expression patterns" value="Expressed in semen and 105 other cell types or tissues"/>
</dbReference>
<dbReference type="GO" id="GO:0005789">
    <property type="term" value="C:endoplasmic reticulum membrane"/>
    <property type="evidence" value="ECO:0000250"/>
    <property type="project" value="UniProtKB"/>
</dbReference>
<dbReference type="GO" id="GO:0005730">
    <property type="term" value="C:nucleolus"/>
    <property type="evidence" value="ECO:0007669"/>
    <property type="project" value="Ensembl"/>
</dbReference>
<dbReference type="GO" id="GO:0005654">
    <property type="term" value="C:nucleoplasm"/>
    <property type="evidence" value="ECO:0007669"/>
    <property type="project" value="Ensembl"/>
</dbReference>
<dbReference type="GO" id="GO:0043130">
    <property type="term" value="F:ubiquitin binding"/>
    <property type="evidence" value="ECO:0000318"/>
    <property type="project" value="GO_Central"/>
</dbReference>
<dbReference type="GO" id="GO:0036503">
    <property type="term" value="P:ERAD pathway"/>
    <property type="evidence" value="ECO:0000250"/>
    <property type="project" value="UniProtKB"/>
</dbReference>
<dbReference type="CDD" id="cd01774">
    <property type="entry name" value="UBX_UBXN8"/>
    <property type="match status" value="1"/>
</dbReference>
<dbReference type="FunFam" id="3.10.20.90:FF:000184">
    <property type="entry name" value="UBX domain-containing protein 8 isoform X1"/>
    <property type="match status" value="1"/>
</dbReference>
<dbReference type="Gene3D" id="3.10.20.90">
    <property type="entry name" value="Phosphatidylinositol 3-kinase Catalytic Subunit, Chain A, domain 1"/>
    <property type="match status" value="1"/>
</dbReference>
<dbReference type="InterPro" id="IPR029071">
    <property type="entry name" value="Ubiquitin-like_domsf"/>
</dbReference>
<dbReference type="InterPro" id="IPR001012">
    <property type="entry name" value="UBX_dom"/>
</dbReference>
<dbReference type="InterPro" id="IPR050730">
    <property type="entry name" value="UBX_domain-protein"/>
</dbReference>
<dbReference type="InterPro" id="IPR017247">
    <property type="entry name" value="UBXN8"/>
</dbReference>
<dbReference type="PANTHER" id="PTHR23322">
    <property type="entry name" value="FAS-ASSOCIATED PROTEIN"/>
    <property type="match status" value="1"/>
</dbReference>
<dbReference type="PANTHER" id="PTHR23322:SF93">
    <property type="entry name" value="UBX DOMAIN-CONTAINING PROTEIN 8"/>
    <property type="match status" value="1"/>
</dbReference>
<dbReference type="Pfam" id="PF00789">
    <property type="entry name" value="UBX"/>
    <property type="match status" value="1"/>
</dbReference>
<dbReference type="PIRSF" id="PIRSF037632">
    <property type="entry name" value="UBX_Rep6"/>
    <property type="match status" value="1"/>
</dbReference>
<dbReference type="SUPFAM" id="SSF54236">
    <property type="entry name" value="Ubiquitin-like"/>
    <property type="match status" value="1"/>
</dbReference>
<dbReference type="PROSITE" id="PS50033">
    <property type="entry name" value="UBX"/>
    <property type="match status" value="1"/>
</dbReference>
<comment type="function">
    <text evidence="1">Involved in endoplasmic reticulum-associated degradation (ERAD) for misfolded lumenal proteins, possibly by tethering VCP to the endoplasmic reticulum membrane. May play a role in reproduction (By similarity).</text>
</comment>
<comment type="function">
    <text evidence="1">May play a role in reproduction.</text>
</comment>
<comment type="subunit">
    <text evidence="1">Interacts with SYVN1 and VCP.</text>
</comment>
<comment type="subcellular location">
    <subcellularLocation>
        <location evidence="1">Endoplasmic reticulum membrane</location>
        <topology evidence="1">Multi-pass membrane protein</topology>
    </subcellularLocation>
</comment>
<accession>Q2TBH5</accession>
<protein>
    <recommendedName>
        <fullName>UBX domain-containing protein 8</fullName>
    </recommendedName>
    <alternativeName>
        <fullName>UBX domain-containing protein 6</fullName>
    </alternativeName>
</protein>
<proteinExistence type="evidence at transcript level"/>
<evidence type="ECO:0000250" key="1"/>
<evidence type="ECO:0000255" key="2"/>
<evidence type="ECO:0000255" key="3">
    <source>
        <dbReference type="PROSITE-ProRule" id="PRU00215"/>
    </source>
</evidence>
<evidence type="ECO:0000256" key="4">
    <source>
        <dbReference type="SAM" id="MobiDB-lite"/>
    </source>
</evidence>
<keyword id="KW-0256">Endoplasmic reticulum</keyword>
<keyword id="KW-0472">Membrane</keyword>
<keyword id="KW-1185">Reference proteome</keyword>
<keyword id="KW-0812">Transmembrane</keyword>
<keyword id="KW-1133">Transmembrane helix</keyword>
<reference key="1">
    <citation type="submission" date="2005-11" db="EMBL/GenBank/DDBJ databases">
        <authorList>
            <consortium name="NIH - Mammalian Gene Collection (MGC) project"/>
        </authorList>
    </citation>
    <scope>NUCLEOTIDE SEQUENCE [LARGE SCALE MRNA]</scope>
    <source>
        <strain>Crossbred X Angus</strain>
        <tissue>Liver</tissue>
    </source>
</reference>
<feature type="chain" id="PRO_0000260762" description="UBX domain-containing protein 8">
    <location>
        <begin position="1"/>
        <end position="275"/>
    </location>
</feature>
<feature type="topological domain" description="Cytoplasmic" evidence="2">
    <location>
        <position position="1"/>
    </location>
</feature>
<feature type="transmembrane region" description="Helical" evidence="2">
    <location>
        <begin position="2"/>
        <end position="22"/>
    </location>
</feature>
<feature type="topological domain" description="Lumenal" evidence="2">
    <location>
        <begin position="23"/>
        <end position="33"/>
    </location>
</feature>
<feature type="transmembrane region" description="Helical" evidence="2">
    <location>
        <begin position="34"/>
        <end position="54"/>
    </location>
</feature>
<feature type="topological domain" description="Cytoplasmic" evidence="2">
    <location>
        <begin position="55"/>
        <end position="275"/>
    </location>
</feature>
<feature type="domain" description="UBX" evidence="3">
    <location>
        <begin position="192"/>
        <end position="268"/>
    </location>
</feature>
<feature type="region of interest" description="Disordered" evidence="4">
    <location>
        <begin position="137"/>
        <end position="181"/>
    </location>
</feature>
<organism>
    <name type="scientific">Bos taurus</name>
    <name type="common">Bovine</name>
    <dbReference type="NCBI Taxonomy" id="9913"/>
    <lineage>
        <taxon>Eukaryota</taxon>
        <taxon>Metazoa</taxon>
        <taxon>Chordata</taxon>
        <taxon>Craniata</taxon>
        <taxon>Vertebrata</taxon>
        <taxon>Euteleostomi</taxon>
        <taxon>Mammalia</taxon>
        <taxon>Eutheria</taxon>
        <taxon>Laurasiatheria</taxon>
        <taxon>Artiodactyla</taxon>
        <taxon>Ruminantia</taxon>
        <taxon>Pecora</taxon>
        <taxon>Bovidae</taxon>
        <taxon>Bovinae</taxon>
        <taxon>Bos</taxon>
    </lineage>
</organism>
<name>UBXN8_BOVIN</name>